<name>DJLA_VIBVU</name>
<evidence type="ECO:0000255" key="1">
    <source>
        <dbReference type="HAMAP-Rule" id="MF_01153"/>
    </source>
</evidence>
<evidence type="ECO:0000256" key="2">
    <source>
        <dbReference type="SAM" id="MobiDB-lite"/>
    </source>
</evidence>
<comment type="function">
    <text evidence="1">Regulatory DnaK co-chaperone. Direct interaction between DnaK and DjlA is needed for the induction of the wcaABCDE operon, involved in the synthesis of a colanic acid polysaccharide capsule, possibly through activation of the RcsB/RcsC phosphotransfer signaling pathway. The colanic acid capsule may help the bacterium survive conditions outside the host.</text>
</comment>
<comment type="subunit">
    <text evidence="1">Homodimer.</text>
</comment>
<comment type="subcellular location">
    <subcellularLocation>
        <location evidence="1">Cell inner membrane</location>
        <topology evidence="1">Single-pass type III membrane protein</topology>
    </subcellularLocation>
</comment>
<comment type="domain">
    <text evidence="1">The transmembrane domain is a dimerization domain.</text>
</comment>
<gene>
    <name evidence="1" type="primary">djlA</name>
    <name type="ordered locus">VV1_0659</name>
</gene>
<dbReference type="EMBL" id="AE016795">
    <property type="protein sequence ID" value="AAO09171.1"/>
    <property type="molecule type" value="Genomic_DNA"/>
</dbReference>
<dbReference type="RefSeq" id="WP_011078738.1">
    <property type="nucleotide sequence ID" value="NC_004459.3"/>
</dbReference>
<dbReference type="SMR" id="Q8DED6"/>
<dbReference type="KEGG" id="vvu:VV1_0659"/>
<dbReference type="HOGENOM" id="CLU_066221_1_0_6"/>
<dbReference type="Proteomes" id="UP000002275">
    <property type="component" value="Chromosome 1"/>
</dbReference>
<dbReference type="GO" id="GO:0005886">
    <property type="term" value="C:plasma membrane"/>
    <property type="evidence" value="ECO:0007669"/>
    <property type="project" value="UniProtKB-SubCell"/>
</dbReference>
<dbReference type="GO" id="GO:0051087">
    <property type="term" value="F:protein-folding chaperone binding"/>
    <property type="evidence" value="ECO:0007669"/>
    <property type="project" value="InterPro"/>
</dbReference>
<dbReference type="CDD" id="cd06257">
    <property type="entry name" value="DnaJ"/>
    <property type="match status" value="1"/>
</dbReference>
<dbReference type="CDD" id="cd07316">
    <property type="entry name" value="terB_like_DjlA"/>
    <property type="match status" value="1"/>
</dbReference>
<dbReference type="FunFam" id="1.10.287.110:FF:000011">
    <property type="entry name" value="Co-chaperone protein DjlA"/>
    <property type="match status" value="1"/>
</dbReference>
<dbReference type="Gene3D" id="1.10.287.110">
    <property type="entry name" value="DnaJ domain"/>
    <property type="match status" value="1"/>
</dbReference>
<dbReference type="Gene3D" id="1.10.3680.10">
    <property type="entry name" value="TerB-like"/>
    <property type="match status" value="1"/>
</dbReference>
<dbReference type="HAMAP" id="MF_01153">
    <property type="entry name" value="DjlA"/>
    <property type="match status" value="1"/>
</dbReference>
<dbReference type="InterPro" id="IPR023749">
    <property type="entry name" value="DjlA"/>
</dbReference>
<dbReference type="InterPro" id="IPR050817">
    <property type="entry name" value="DjlA_DnaK_co-chaperone"/>
</dbReference>
<dbReference type="InterPro" id="IPR007791">
    <property type="entry name" value="DjlA_N"/>
</dbReference>
<dbReference type="InterPro" id="IPR001623">
    <property type="entry name" value="DnaJ_domain"/>
</dbReference>
<dbReference type="InterPro" id="IPR036869">
    <property type="entry name" value="J_dom_sf"/>
</dbReference>
<dbReference type="InterPro" id="IPR029024">
    <property type="entry name" value="TerB-like"/>
</dbReference>
<dbReference type="NCBIfam" id="NF006948">
    <property type="entry name" value="PRK09430.1"/>
    <property type="match status" value="1"/>
</dbReference>
<dbReference type="PANTHER" id="PTHR24074">
    <property type="entry name" value="CO-CHAPERONE PROTEIN DJLA"/>
    <property type="match status" value="1"/>
</dbReference>
<dbReference type="Pfam" id="PF00226">
    <property type="entry name" value="DnaJ"/>
    <property type="match status" value="1"/>
</dbReference>
<dbReference type="Pfam" id="PF05099">
    <property type="entry name" value="TerB"/>
    <property type="match status" value="1"/>
</dbReference>
<dbReference type="PRINTS" id="PR00625">
    <property type="entry name" value="JDOMAIN"/>
</dbReference>
<dbReference type="SMART" id="SM00271">
    <property type="entry name" value="DnaJ"/>
    <property type="match status" value="1"/>
</dbReference>
<dbReference type="SUPFAM" id="SSF46565">
    <property type="entry name" value="Chaperone J-domain"/>
    <property type="match status" value="1"/>
</dbReference>
<dbReference type="SUPFAM" id="SSF158682">
    <property type="entry name" value="TerB-like"/>
    <property type="match status" value="1"/>
</dbReference>
<dbReference type="PROSITE" id="PS50076">
    <property type="entry name" value="DNAJ_2"/>
    <property type="match status" value="1"/>
</dbReference>
<protein>
    <recommendedName>
        <fullName evidence="1">Co-chaperone protein DjlA</fullName>
    </recommendedName>
</protein>
<proteinExistence type="inferred from homology"/>
<reference key="1">
    <citation type="submission" date="2002-12" db="EMBL/GenBank/DDBJ databases">
        <title>Complete genome sequence of Vibrio vulnificus CMCP6.</title>
        <authorList>
            <person name="Rhee J.H."/>
            <person name="Kim S.Y."/>
            <person name="Chung S.S."/>
            <person name="Kim J.J."/>
            <person name="Moon Y.H."/>
            <person name="Jeong H."/>
            <person name="Choy H.E."/>
        </authorList>
    </citation>
    <scope>NUCLEOTIDE SEQUENCE [LARGE SCALE GENOMIC DNA]</scope>
    <source>
        <strain>CMCP6</strain>
    </source>
</reference>
<feature type="chain" id="PRO_0000209443" description="Co-chaperone protein DjlA">
    <location>
        <begin position="1"/>
        <end position="287"/>
    </location>
</feature>
<feature type="topological domain" description="Periplasmic" evidence="1">
    <location>
        <begin position="1"/>
        <end position="6"/>
    </location>
</feature>
<feature type="transmembrane region" description="Helical" evidence="1">
    <location>
        <begin position="7"/>
        <end position="30"/>
    </location>
</feature>
<feature type="topological domain" description="Cytoplasmic" evidence="1">
    <location>
        <begin position="31"/>
        <end position="287"/>
    </location>
</feature>
<feature type="domain" description="J" evidence="1">
    <location>
        <begin position="221"/>
        <end position="287"/>
    </location>
</feature>
<feature type="region of interest" description="Disordered" evidence="2">
    <location>
        <begin position="192"/>
        <end position="213"/>
    </location>
</feature>
<organism>
    <name type="scientific">Vibrio vulnificus (strain CMCP6)</name>
    <dbReference type="NCBI Taxonomy" id="216895"/>
    <lineage>
        <taxon>Bacteria</taxon>
        <taxon>Pseudomonadati</taxon>
        <taxon>Pseudomonadota</taxon>
        <taxon>Gammaproteobacteria</taxon>
        <taxon>Vibrionales</taxon>
        <taxon>Vibrionaceae</taxon>
        <taxon>Vibrio</taxon>
    </lineage>
</organism>
<keyword id="KW-0997">Cell inner membrane</keyword>
<keyword id="KW-1003">Cell membrane</keyword>
<keyword id="KW-0143">Chaperone</keyword>
<keyword id="KW-0472">Membrane</keyword>
<keyword id="KW-0812">Transmembrane</keyword>
<keyword id="KW-1133">Transmembrane helix</keyword>
<accession>Q8DED6</accession>
<sequence length="287" mass="32229">MQIFGKILGAFFGFLFGGVFGALFGLFIGHQFDKARRLSQAGFKTAGFGQGPSQAQRQEEFFKSAFAVMGHVAKAKGQVTKEEIQLASAMMDRMSLHGEQRRAAQDAFREGKERDFPLEQVLERVKIATSGRFDLLQFFLELQISAAFADGDVHPSERNVLHKIARGLGFSSEQLERRLQMQEAAFRFQRQGGFGGQQHQSHHSSSHGGWQQASQTDRLADAYKILGIDANADGKEVKRAYRKLMNEHHPDKLMAKGLPPEMMNMAKEKSQEIQSAYDLIKKEKGFK</sequence>